<reference key="1">
    <citation type="journal article" date="2005" name="DNA Res.">
        <title>Complete genome sequence of the facultative anaerobic magnetotactic bacterium Magnetospirillum sp. strain AMB-1.</title>
        <authorList>
            <person name="Matsunaga T."/>
            <person name="Okamura Y."/>
            <person name="Fukuda Y."/>
            <person name="Wahyudi A.T."/>
            <person name="Murase Y."/>
            <person name="Takeyama H."/>
        </authorList>
    </citation>
    <scope>NUCLEOTIDE SEQUENCE [LARGE SCALE GENOMIC DNA]</scope>
    <source>
        <strain>ATCC 700264 / AMB-1</strain>
    </source>
</reference>
<evidence type="ECO:0000255" key="1">
    <source>
        <dbReference type="HAMAP-Rule" id="MF_01318"/>
    </source>
</evidence>
<evidence type="ECO:0000305" key="2"/>
<organism>
    <name type="scientific">Paramagnetospirillum magneticum (strain ATCC 700264 / AMB-1)</name>
    <name type="common">Magnetospirillum magneticum</name>
    <dbReference type="NCBI Taxonomy" id="342108"/>
    <lineage>
        <taxon>Bacteria</taxon>
        <taxon>Pseudomonadati</taxon>
        <taxon>Pseudomonadota</taxon>
        <taxon>Alphaproteobacteria</taxon>
        <taxon>Rhodospirillales</taxon>
        <taxon>Magnetospirillaceae</taxon>
        <taxon>Paramagnetospirillum</taxon>
    </lineage>
</organism>
<sequence>MAREGKRLKSAYADIDRDKFYSLADAVKAIKTRAVAKFDETIEIALNLGVDPRHADQMVRGVVELPHGTGKTVRVAVFAKGDKAEEARKAGADIVGEQDLFDACNAGNMDFDRVIATPDLMGLVGRLGKVLGPRGLMPNPKLGTVTANVTEAVRAAKAGQVQFRVEKAGIVHAGIGKASFSEEKLAENVKAFVDAITKAKPQGAKGTYLKKVSLSSTMGPGVKLDVATLA</sequence>
<proteinExistence type="inferred from homology"/>
<comment type="function">
    <text evidence="1">Binds directly to 23S rRNA. The L1 stalk is quite mobile in the ribosome, and is involved in E site tRNA release.</text>
</comment>
<comment type="function">
    <text evidence="1">Protein L1 is also a translational repressor protein, it controls the translation of the L11 operon by binding to its mRNA.</text>
</comment>
<comment type="subunit">
    <text evidence="1">Part of the 50S ribosomal subunit.</text>
</comment>
<comment type="similarity">
    <text evidence="1">Belongs to the universal ribosomal protein uL1 family.</text>
</comment>
<dbReference type="EMBL" id="AP007255">
    <property type="protein sequence ID" value="BAE51947.1"/>
    <property type="molecule type" value="Genomic_DNA"/>
</dbReference>
<dbReference type="RefSeq" id="WP_011385509.1">
    <property type="nucleotide sequence ID" value="NC_007626.1"/>
</dbReference>
<dbReference type="SMR" id="Q2W2H8"/>
<dbReference type="STRING" id="342108.amb3143"/>
<dbReference type="KEGG" id="mag:amb3143"/>
<dbReference type="HOGENOM" id="CLU_062853_0_0_5"/>
<dbReference type="OrthoDB" id="9803740at2"/>
<dbReference type="Proteomes" id="UP000007058">
    <property type="component" value="Chromosome"/>
</dbReference>
<dbReference type="GO" id="GO:0022625">
    <property type="term" value="C:cytosolic large ribosomal subunit"/>
    <property type="evidence" value="ECO:0007669"/>
    <property type="project" value="TreeGrafter"/>
</dbReference>
<dbReference type="GO" id="GO:0019843">
    <property type="term" value="F:rRNA binding"/>
    <property type="evidence" value="ECO:0007669"/>
    <property type="project" value="UniProtKB-UniRule"/>
</dbReference>
<dbReference type="GO" id="GO:0003735">
    <property type="term" value="F:structural constituent of ribosome"/>
    <property type="evidence" value="ECO:0007669"/>
    <property type="project" value="InterPro"/>
</dbReference>
<dbReference type="GO" id="GO:0000049">
    <property type="term" value="F:tRNA binding"/>
    <property type="evidence" value="ECO:0007669"/>
    <property type="project" value="UniProtKB-KW"/>
</dbReference>
<dbReference type="GO" id="GO:0006417">
    <property type="term" value="P:regulation of translation"/>
    <property type="evidence" value="ECO:0007669"/>
    <property type="project" value="UniProtKB-KW"/>
</dbReference>
<dbReference type="GO" id="GO:0006412">
    <property type="term" value="P:translation"/>
    <property type="evidence" value="ECO:0007669"/>
    <property type="project" value="UniProtKB-UniRule"/>
</dbReference>
<dbReference type="CDD" id="cd00403">
    <property type="entry name" value="Ribosomal_L1"/>
    <property type="match status" value="1"/>
</dbReference>
<dbReference type="FunFam" id="3.40.50.790:FF:000001">
    <property type="entry name" value="50S ribosomal protein L1"/>
    <property type="match status" value="1"/>
</dbReference>
<dbReference type="Gene3D" id="3.30.190.20">
    <property type="match status" value="1"/>
</dbReference>
<dbReference type="Gene3D" id="3.40.50.790">
    <property type="match status" value="1"/>
</dbReference>
<dbReference type="HAMAP" id="MF_01318_B">
    <property type="entry name" value="Ribosomal_uL1_B"/>
    <property type="match status" value="1"/>
</dbReference>
<dbReference type="InterPro" id="IPR005878">
    <property type="entry name" value="Ribosom_uL1_bac-type"/>
</dbReference>
<dbReference type="InterPro" id="IPR002143">
    <property type="entry name" value="Ribosomal_uL1"/>
</dbReference>
<dbReference type="InterPro" id="IPR023674">
    <property type="entry name" value="Ribosomal_uL1-like"/>
</dbReference>
<dbReference type="InterPro" id="IPR028364">
    <property type="entry name" value="Ribosomal_uL1/biogenesis"/>
</dbReference>
<dbReference type="InterPro" id="IPR016095">
    <property type="entry name" value="Ribosomal_uL1_3-a/b-sand"/>
</dbReference>
<dbReference type="InterPro" id="IPR023673">
    <property type="entry name" value="Ribosomal_uL1_CS"/>
</dbReference>
<dbReference type="NCBIfam" id="TIGR01169">
    <property type="entry name" value="rplA_bact"/>
    <property type="match status" value="1"/>
</dbReference>
<dbReference type="PANTHER" id="PTHR36427">
    <property type="entry name" value="54S RIBOSOMAL PROTEIN L1, MITOCHONDRIAL"/>
    <property type="match status" value="1"/>
</dbReference>
<dbReference type="PANTHER" id="PTHR36427:SF3">
    <property type="entry name" value="LARGE RIBOSOMAL SUBUNIT PROTEIN UL1M"/>
    <property type="match status" value="1"/>
</dbReference>
<dbReference type="Pfam" id="PF00687">
    <property type="entry name" value="Ribosomal_L1"/>
    <property type="match status" value="1"/>
</dbReference>
<dbReference type="PIRSF" id="PIRSF002155">
    <property type="entry name" value="Ribosomal_L1"/>
    <property type="match status" value="1"/>
</dbReference>
<dbReference type="SUPFAM" id="SSF56808">
    <property type="entry name" value="Ribosomal protein L1"/>
    <property type="match status" value="1"/>
</dbReference>
<dbReference type="PROSITE" id="PS01199">
    <property type="entry name" value="RIBOSOMAL_L1"/>
    <property type="match status" value="1"/>
</dbReference>
<keyword id="KW-0678">Repressor</keyword>
<keyword id="KW-0687">Ribonucleoprotein</keyword>
<keyword id="KW-0689">Ribosomal protein</keyword>
<keyword id="KW-0694">RNA-binding</keyword>
<keyword id="KW-0699">rRNA-binding</keyword>
<keyword id="KW-0810">Translation regulation</keyword>
<keyword id="KW-0820">tRNA-binding</keyword>
<accession>Q2W2H8</accession>
<name>RL1_PARM1</name>
<gene>
    <name evidence="1" type="primary">rplA</name>
    <name type="ordered locus">amb3143</name>
</gene>
<protein>
    <recommendedName>
        <fullName evidence="1">Large ribosomal subunit protein uL1</fullName>
    </recommendedName>
    <alternativeName>
        <fullName evidence="2">50S ribosomal protein L1</fullName>
    </alternativeName>
</protein>
<feature type="chain" id="PRO_0000308042" description="Large ribosomal subunit protein uL1">
    <location>
        <begin position="1"/>
        <end position="230"/>
    </location>
</feature>